<proteinExistence type="inferred from homology"/>
<dbReference type="EC" id="2.3.1.61" evidence="2"/>
<dbReference type="EMBL" id="AE015929">
    <property type="protein sequence ID" value="AAO04693.1"/>
    <property type="molecule type" value="Genomic_DNA"/>
</dbReference>
<dbReference type="RefSeq" id="NP_764651.1">
    <property type="nucleotide sequence ID" value="NC_004461.1"/>
</dbReference>
<dbReference type="RefSeq" id="WP_001832759.1">
    <property type="nucleotide sequence ID" value="NZ_WBME01000002.1"/>
</dbReference>
<dbReference type="SMR" id="Q8CSL9"/>
<dbReference type="GeneID" id="50018778"/>
<dbReference type="KEGG" id="sep:SE_1096"/>
<dbReference type="PATRIC" id="fig|176280.10.peg.1072"/>
<dbReference type="eggNOG" id="COG0508">
    <property type="taxonomic scope" value="Bacteria"/>
</dbReference>
<dbReference type="HOGENOM" id="CLU_016733_0_0_9"/>
<dbReference type="OrthoDB" id="9805770at2"/>
<dbReference type="UniPathway" id="UPA00868">
    <property type="reaction ID" value="UER00840"/>
</dbReference>
<dbReference type="Proteomes" id="UP000001411">
    <property type="component" value="Chromosome"/>
</dbReference>
<dbReference type="GO" id="GO:0005829">
    <property type="term" value="C:cytosol"/>
    <property type="evidence" value="ECO:0007669"/>
    <property type="project" value="TreeGrafter"/>
</dbReference>
<dbReference type="GO" id="GO:0045252">
    <property type="term" value="C:oxoglutarate dehydrogenase complex"/>
    <property type="evidence" value="ECO:0007669"/>
    <property type="project" value="InterPro"/>
</dbReference>
<dbReference type="GO" id="GO:0004149">
    <property type="term" value="F:dihydrolipoyllysine-residue succinyltransferase activity"/>
    <property type="evidence" value="ECO:0007669"/>
    <property type="project" value="UniProtKB-EC"/>
</dbReference>
<dbReference type="GO" id="GO:0033512">
    <property type="term" value="P:L-lysine catabolic process to acetyl-CoA via saccharopine"/>
    <property type="evidence" value="ECO:0007669"/>
    <property type="project" value="UniProtKB-UniPathway"/>
</dbReference>
<dbReference type="GO" id="GO:0006099">
    <property type="term" value="P:tricarboxylic acid cycle"/>
    <property type="evidence" value="ECO:0007669"/>
    <property type="project" value="UniProtKB-KW"/>
</dbReference>
<dbReference type="CDD" id="cd06849">
    <property type="entry name" value="lipoyl_domain"/>
    <property type="match status" value="1"/>
</dbReference>
<dbReference type="FunFam" id="3.30.559.10:FF:000007">
    <property type="entry name" value="Dihydrolipoamide acetyltransferase component of pyruvate dehydrogenase complex"/>
    <property type="match status" value="1"/>
</dbReference>
<dbReference type="Gene3D" id="2.40.50.100">
    <property type="match status" value="1"/>
</dbReference>
<dbReference type="Gene3D" id="3.30.559.10">
    <property type="entry name" value="Chloramphenicol acetyltransferase-like domain"/>
    <property type="match status" value="1"/>
</dbReference>
<dbReference type="Gene3D" id="4.10.320.10">
    <property type="entry name" value="E3-binding domain"/>
    <property type="match status" value="1"/>
</dbReference>
<dbReference type="InterPro" id="IPR003016">
    <property type="entry name" value="2-oxoA_DH_lipoyl-BS"/>
</dbReference>
<dbReference type="InterPro" id="IPR050537">
    <property type="entry name" value="2-oxoacid_dehydrogenase"/>
</dbReference>
<dbReference type="InterPro" id="IPR001078">
    <property type="entry name" value="2-oxoacid_DH_actylTfrase"/>
</dbReference>
<dbReference type="InterPro" id="IPR000089">
    <property type="entry name" value="Biotin_lipoyl"/>
</dbReference>
<dbReference type="InterPro" id="IPR023213">
    <property type="entry name" value="CAT-like_dom_sf"/>
</dbReference>
<dbReference type="InterPro" id="IPR036625">
    <property type="entry name" value="E3-bd_dom_sf"/>
</dbReference>
<dbReference type="InterPro" id="IPR004167">
    <property type="entry name" value="PSBD"/>
</dbReference>
<dbReference type="InterPro" id="IPR011053">
    <property type="entry name" value="Single_hybrid_motif"/>
</dbReference>
<dbReference type="InterPro" id="IPR006255">
    <property type="entry name" value="SucB"/>
</dbReference>
<dbReference type="NCBIfam" id="NF004309">
    <property type="entry name" value="PRK05704.1"/>
    <property type="match status" value="1"/>
</dbReference>
<dbReference type="NCBIfam" id="TIGR01347">
    <property type="entry name" value="sucB"/>
    <property type="match status" value="1"/>
</dbReference>
<dbReference type="PANTHER" id="PTHR43416:SF5">
    <property type="entry name" value="DIHYDROLIPOYLLYSINE-RESIDUE SUCCINYLTRANSFERASE COMPONENT OF 2-OXOGLUTARATE DEHYDROGENASE COMPLEX, MITOCHONDRIAL"/>
    <property type="match status" value="1"/>
</dbReference>
<dbReference type="PANTHER" id="PTHR43416">
    <property type="entry name" value="DIHYDROLIPOYLLYSINE-RESIDUE SUCCINYLTRANSFERASE COMPONENT OF 2-OXOGLUTARATE DEHYDROGENASE COMPLEX, MITOCHONDRIAL-RELATED"/>
    <property type="match status" value="1"/>
</dbReference>
<dbReference type="Pfam" id="PF00198">
    <property type="entry name" value="2-oxoacid_dh"/>
    <property type="match status" value="1"/>
</dbReference>
<dbReference type="Pfam" id="PF00364">
    <property type="entry name" value="Biotin_lipoyl"/>
    <property type="match status" value="1"/>
</dbReference>
<dbReference type="Pfam" id="PF02817">
    <property type="entry name" value="E3_binding"/>
    <property type="match status" value="1"/>
</dbReference>
<dbReference type="SUPFAM" id="SSF52777">
    <property type="entry name" value="CoA-dependent acyltransferases"/>
    <property type="match status" value="1"/>
</dbReference>
<dbReference type="SUPFAM" id="SSF47005">
    <property type="entry name" value="Peripheral subunit-binding domain of 2-oxo acid dehydrogenase complex"/>
    <property type="match status" value="1"/>
</dbReference>
<dbReference type="SUPFAM" id="SSF51230">
    <property type="entry name" value="Single hybrid motif"/>
    <property type="match status" value="1"/>
</dbReference>
<dbReference type="PROSITE" id="PS50968">
    <property type="entry name" value="BIOTINYL_LIPOYL"/>
    <property type="match status" value="1"/>
</dbReference>
<dbReference type="PROSITE" id="PS00189">
    <property type="entry name" value="LIPOYL"/>
    <property type="match status" value="1"/>
</dbReference>
<dbReference type="PROSITE" id="PS51826">
    <property type="entry name" value="PSBD"/>
    <property type="match status" value="1"/>
</dbReference>
<accession>Q8CSL9</accession>
<keyword id="KW-0012">Acyltransferase</keyword>
<keyword id="KW-0450">Lipoyl</keyword>
<keyword id="KW-0808">Transferase</keyword>
<keyword id="KW-0816">Tricarboxylic acid cycle</keyword>
<sequence>MAEVKVPELAESITEGTIAEWLKNVGDNVDKGEAILELETDKVNVEVVSEEAGVLSEQLAEEGDTVEVGQAVAVVGEGQVNTSNDSSNESSQKDEAKEKETPKQSNPNSSESENTQDNSQQRINATPSARRHARKNGVDLSEVSGKGNDVLRKDDVENSQKSSSQTAKSESKSQNSGSKQSNNNPSKPVIREKMSRRKKTAAKKLLEVSNQTAMLTTFNEVDMTNVMDLRKRKKEQFIKDHDGTKLGFMSFFTKAAVAALKKYPEVNAEIDGDDMITKQFYDIGIAVSTDDGLLVPFVRDCDKKNFAEIEQEIANLAVKARDKKLGLDDMVNGSFTITNGGIFGSMMSTPIINGNQAAILGMHSIITRPIAVDKDTIENRPMMYIALSYDHRIIDGKEAVGFLKTIKELIENPEDLLLES</sequence>
<gene>
    <name type="primary">odhB</name>
    <name type="synonym">sucB</name>
    <name type="ordered locus">SE_1096</name>
</gene>
<reference key="1">
    <citation type="journal article" date="2003" name="Mol. Microbiol.">
        <title>Genome-based analysis of virulence genes in a non-biofilm-forming Staphylococcus epidermidis strain (ATCC 12228).</title>
        <authorList>
            <person name="Zhang Y.-Q."/>
            <person name="Ren S.-X."/>
            <person name="Li H.-L."/>
            <person name="Wang Y.-X."/>
            <person name="Fu G."/>
            <person name="Yang J."/>
            <person name="Qin Z.-Q."/>
            <person name="Miao Y.-G."/>
            <person name="Wang W.-Y."/>
            <person name="Chen R.-S."/>
            <person name="Shen Y."/>
            <person name="Chen Z."/>
            <person name="Yuan Z.-H."/>
            <person name="Zhao G.-P."/>
            <person name="Qu D."/>
            <person name="Danchin A."/>
            <person name="Wen Y.-M."/>
        </authorList>
    </citation>
    <scope>NUCLEOTIDE SEQUENCE [LARGE SCALE GENOMIC DNA]</scope>
    <source>
        <strain>ATCC 12228 / FDA PCI 1200</strain>
    </source>
</reference>
<organism>
    <name type="scientific">Staphylococcus epidermidis (strain ATCC 12228 / FDA PCI 1200)</name>
    <dbReference type="NCBI Taxonomy" id="176280"/>
    <lineage>
        <taxon>Bacteria</taxon>
        <taxon>Bacillati</taxon>
        <taxon>Bacillota</taxon>
        <taxon>Bacilli</taxon>
        <taxon>Bacillales</taxon>
        <taxon>Staphylococcaceae</taxon>
        <taxon>Staphylococcus</taxon>
    </lineage>
</organism>
<name>ODO2_STAES</name>
<feature type="chain" id="PRO_0000288107" description="Dihydrolipoyllysine-residue succinyltransferase component of 2-oxoglutarate dehydrogenase complex">
    <location>
        <begin position="1"/>
        <end position="420"/>
    </location>
</feature>
<feature type="domain" description="Lipoyl-binding" evidence="3">
    <location>
        <begin position="1"/>
        <end position="76"/>
    </location>
</feature>
<feature type="domain" description="Peripheral subunit-binding (PSBD)" evidence="4">
    <location>
        <begin position="124"/>
        <end position="160"/>
    </location>
</feature>
<feature type="region of interest" description="Disordered" evidence="5">
    <location>
        <begin position="75"/>
        <end position="201"/>
    </location>
</feature>
<feature type="compositionally biased region" description="Polar residues" evidence="5">
    <location>
        <begin position="81"/>
        <end position="90"/>
    </location>
</feature>
<feature type="compositionally biased region" description="Basic and acidic residues" evidence="5">
    <location>
        <begin position="91"/>
        <end position="102"/>
    </location>
</feature>
<feature type="compositionally biased region" description="Polar residues" evidence="5">
    <location>
        <begin position="103"/>
        <end position="127"/>
    </location>
</feature>
<feature type="compositionally biased region" description="Basic and acidic residues" evidence="5">
    <location>
        <begin position="149"/>
        <end position="158"/>
    </location>
</feature>
<feature type="compositionally biased region" description="Low complexity" evidence="5">
    <location>
        <begin position="159"/>
        <end position="188"/>
    </location>
</feature>
<feature type="active site" evidence="2">
    <location>
        <position position="391"/>
    </location>
</feature>
<feature type="active site" evidence="2">
    <location>
        <position position="395"/>
    </location>
</feature>
<feature type="modified residue" description="N6-lipoyllysine" evidence="3">
    <location>
        <position position="42"/>
    </location>
</feature>
<protein>
    <recommendedName>
        <fullName>Dihydrolipoyllysine-residue succinyltransferase component of 2-oxoglutarate dehydrogenase complex</fullName>
        <ecNumber evidence="2">2.3.1.61</ecNumber>
    </recommendedName>
    <alternativeName>
        <fullName>2-oxoglutarate dehydrogenase complex component E2</fullName>
        <shortName>OGDC-E2</shortName>
    </alternativeName>
    <alternativeName>
        <fullName>Dihydrolipoamide succinyltransferase component of 2-oxoglutarate dehydrogenase complex</fullName>
    </alternativeName>
</protein>
<evidence type="ECO:0000250" key="1"/>
<evidence type="ECO:0000250" key="2">
    <source>
        <dbReference type="UniProtKB" id="P0AFG6"/>
    </source>
</evidence>
<evidence type="ECO:0000255" key="3">
    <source>
        <dbReference type="PROSITE-ProRule" id="PRU01066"/>
    </source>
</evidence>
<evidence type="ECO:0000255" key="4">
    <source>
        <dbReference type="PROSITE-ProRule" id="PRU01170"/>
    </source>
</evidence>
<evidence type="ECO:0000256" key="5">
    <source>
        <dbReference type="SAM" id="MobiDB-lite"/>
    </source>
</evidence>
<evidence type="ECO:0000305" key="6"/>
<comment type="function">
    <text evidence="2">E2 component of the 2-oxoglutarate dehydrogenase (OGDH) complex which catalyzes the second step in the conversion of 2-oxoglutarate to succinyl-CoA and CO(2).</text>
</comment>
<comment type="catalytic activity">
    <reaction evidence="2">
        <text>N(6)-[(R)-dihydrolipoyl]-L-lysyl-[protein] + succinyl-CoA = N(6)-[(R)-S(8)-succinyldihydrolipoyl]-L-lysyl-[protein] + CoA</text>
        <dbReference type="Rhea" id="RHEA:15213"/>
        <dbReference type="Rhea" id="RHEA-COMP:10475"/>
        <dbReference type="Rhea" id="RHEA-COMP:20092"/>
        <dbReference type="ChEBI" id="CHEBI:57287"/>
        <dbReference type="ChEBI" id="CHEBI:57292"/>
        <dbReference type="ChEBI" id="CHEBI:83100"/>
        <dbReference type="ChEBI" id="CHEBI:83120"/>
        <dbReference type="EC" id="2.3.1.61"/>
    </reaction>
</comment>
<comment type="cofactor">
    <cofactor evidence="1">
        <name>(R)-lipoate</name>
        <dbReference type="ChEBI" id="CHEBI:83088"/>
    </cofactor>
    <text evidence="1">Binds 1 lipoyl cofactor covalently.</text>
</comment>
<comment type="pathway">
    <text>Amino-acid degradation; L-lysine degradation via saccharopine pathway; glutaryl-CoA from L-lysine: step 6/6.</text>
</comment>
<comment type="subunit">
    <text evidence="2">Forms a 24-polypeptide structural core with octahedral symmetry. Part of the 2-oxoglutarate dehydrogenase (OGDH) complex composed of E1 (2-oxoglutarate dehydrogenase), E2 (dihydrolipoamide succinyltransferase) and E3 (dihydrolipoamide dehydrogenase); the complex contains multiple copies of the three enzymatic components (E1, E2 and E3).</text>
</comment>
<comment type="similarity">
    <text evidence="6">Belongs to the 2-oxoacid dehydrogenase family.</text>
</comment>